<gene>
    <name type="primary">bioWF</name>
    <name type="ordered locus">ckrop_1506</name>
</gene>
<keyword id="KW-0067">ATP-binding</keyword>
<keyword id="KW-0093">Biotin biosynthesis</keyword>
<keyword id="KW-0436">Ligase</keyword>
<keyword id="KW-0460">Magnesium</keyword>
<keyword id="KW-0511">Multifunctional enzyme</keyword>
<keyword id="KW-0547">Nucleotide-binding</keyword>
<keyword id="KW-0663">Pyridoxal phosphate</keyword>
<keyword id="KW-1185">Reference proteome</keyword>
<keyword id="KW-0808">Transferase</keyword>
<comment type="function">
    <text evidence="1">Catalyzes both the decarboxylative condensation of pimeloyl-[acyl-carrier protein] and L-alanine to produce 8-amino-7-oxononanoate (AON), [acyl-carrier protein], and carbon dioxide, and the transformation of pimelate into pimeloyl-CoA with concomitant hydrolysis of ATP to AMP.</text>
</comment>
<comment type="catalytic activity">
    <reaction>
        <text>heptanedioate + ATP + CoA = 6-carboxyhexanoyl-CoA + AMP + diphosphate</text>
        <dbReference type="Rhea" id="RHEA:14781"/>
        <dbReference type="ChEBI" id="CHEBI:30616"/>
        <dbReference type="ChEBI" id="CHEBI:33019"/>
        <dbReference type="ChEBI" id="CHEBI:36165"/>
        <dbReference type="ChEBI" id="CHEBI:57287"/>
        <dbReference type="ChEBI" id="CHEBI:57360"/>
        <dbReference type="ChEBI" id="CHEBI:456215"/>
        <dbReference type="EC" id="6.2.1.14"/>
    </reaction>
</comment>
<comment type="catalytic activity">
    <reaction>
        <text>6-carboxyhexanoyl-[ACP] + L-alanine + H(+) = (8S)-8-amino-7-oxononanoate + holo-[ACP] + CO2</text>
        <dbReference type="Rhea" id="RHEA:42288"/>
        <dbReference type="Rhea" id="RHEA-COMP:9685"/>
        <dbReference type="Rhea" id="RHEA-COMP:9955"/>
        <dbReference type="ChEBI" id="CHEBI:15378"/>
        <dbReference type="ChEBI" id="CHEBI:16526"/>
        <dbReference type="ChEBI" id="CHEBI:57972"/>
        <dbReference type="ChEBI" id="CHEBI:64479"/>
        <dbReference type="ChEBI" id="CHEBI:78846"/>
        <dbReference type="ChEBI" id="CHEBI:149468"/>
        <dbReference type="EC" id="2.3.1.47"/>
    </reaction>
</comment>
<comment type="cofactor">
    <cofactor evidence="1">
        <name>Mg(2+)</name>
        <dbReference type="ChEBI" id="CHEBI:18420"/>
    </cofactor>
</comment>
<comment type="cofactor">
    <cofactor evidence="1">
        <name>pyridoxal 5'-phosphate</name>
        <dbReference type="ChEBI" id="CHEBI:597326"/>
    </cofactor>
</comment>
<comment type="pathway">
    <text>Metabolic intermediate metabolism; pimeloyl-CoA biosynthesis; pimeloyl-CoA from pimelate: step 1/1.</text>
</comment>
<comment type="pathway">
    <text>Cofactor biosynthesis; biotin biosynthesis.</text>
</comment>
<comment type="subunit">
    <text evidence="1">Homodimer.</text>
</comment>
<comment type="similarity">
    <text evidence="3">In the N-terminal section; belongs to the BioW family.</text>
</comment>
<comment type="similarity">
    <text evidence="3">In the C-terminal section; belongs to the class-II pyridoxal-phosphate-dependent aminotransferase family. BioF subfamily.</text>
</comment>
<sequence length="720" mass="77612">MRFSIKMRASARVSSSPSTSDGSSGDHTESRDRADRHISGAERIVSASDIMQTVTELEHRAWTHSNGQPDDVVVSVHRVDEDEITHIPALTRETRHTHTVDDAHRTITEILRDAGIRTAEHALKALTRIRGMRGAMLLDADTGERRDTKDIRGVRVTALDNDMATGADAAEEMSSSAATKPYYCEALTLASKVQYHPAVCAELCISDDPDYTTGYVSTSGRYVRIENIKPMGSPQGGRVFLVRGTDDEIADCINYLENTAVIVHGIPWPPQDNHSAHRDEPDAFGAIPATDIATDLTTFAEQSLTAWENKGLRRYPLEFSSAPMPRTTVAGSDTLLFSSSNYLGLSEHPDVIAAATEALKHYGAGTGGSRLTTGNFTIHTSTERTLAEFTGYDDAVLFGTGYQANGAALATLATNIPEAPSTAPANTPGMTIFSDELNHASLIDGIRMATRGNAAVRIYPHKDTEHLENALAQCASPRKLIVSDGVFSMNGDIAPLPSIMRLARAHGSWVLIDDAHGTGTLGRTGRGIVEYWSDARRQDAGADSSPGEELPNDSDLQPDLLVVTASKALGSEGAAVCCSTPVAEFLRNRARGYVFSTSSAPASVAATQVAVATILREPERVHRLQDNSLYLRNQLREHGIPLVDGTSNSTPIIPIFIGDEADAVRISQGLSDRGFHVPGIRYPTVARGQAILRVTTMATHTRDDLDHLVDALRDLMPHSA</sequence>
<reference key="1">
    <citation type="journal article" date="2008" name="J. Biotechnol.">
        <title>Ultrafast pyrosequencing of Corynebacterium kroppenstedtii DSM44385 revealed insights into the physiology of a lipophilic corynebacterium that lacks mycolic acids.</title>
        <authorList>
            <person name="Tauch A."/>
            <person name="Schneider J."/>
            <person name="Szczepanowski R."/>
            <person name="Tilker A."/>
            <person name="Viehoever P."/>
            <person name="Gartemann K.-H."/>
            <person name="Arnold W."/>
            <person name="Blom J."/>
            <person name="Brinkrolf K."/>
            <person name="Brune I."/>
            <person name="Goetker S."/>
            <person name="Weisshaar B."/>
            <person name="Goesmann A."/>
            <person name="Droege M."/>
            <person name="Puehler A."/>
        </authorList>
    </citation>
    <scope>NUCLEOTIDE SEQUENCE [LARGE SCALE GENOMIC DNA]</scope>
    <source>
        <strain>DSM 44385 / JCM 11950 / CIP 105744 / CCUG 35717</strain>
    </source>
</reference>
<organism>
    <name type="scientific">Corynebacterium kroppenstedtii (strain DSM 44385 / JCM 11950 / CIP 105744 / CCUG 35717)</name>
    <dbReference type="NCBI Taxonomy" id="645127"/>
    <lineage>
        <taxon>Bacteria</taxon>
        <taxon>Bacillati</taxon>
        <taxon>Actinomycetota</taxon>
        <taxon>Actinomycetes</taxon>
        <taxon>Mycobacteriales</taxon>
        <taxon>Corynebacteriaceae</taxon>
        <taxon>Corynebacterium</taxon>
    </lineage>
</organism>
<evidence type="ECO:0000250" key="1"/>
<evidence type="ECO:0000256" key="2">
    <source>
        <dbReference type="SAM" id="MobiDB-lite"/>
    </source>
</evidence>
<evidence type="ECO:0000305" key="3"/>
<proteinExistence type="inferred from homology"/>
<feature type="chain" id="PRO_0000412104" description="Biotin biosynthesis bifunctional protein BioWF">
    <location>
        <begin position="1"/>
        <end position="720"/>
    </location>
</feature>
<feature type="region of interest" description="Disordered" evidence="2">
    <location>
        <begin position="1"/>
        <end position="39"/>
    </location>
</feature>
<feature type="compositionally biased region" description="Low complexity" evidence="2">
    <location>
        <begin position="8"/>
        <end position="23"/>
    </location>
</feature>
<feature type="compositionally biased region" description="Basic and acidic residues" evidence="2">
    <location>
        <begin position="24"/>
        <end position="39"/>
    </location>
</feature>
<feature type="binding site" evidence="1">
    <location>
        <position position="314"/>
    </location>
    <ligand>
        <name>substrate</name>
    </ligand>
</feature>
<feature type="binding site" evidence="1">
    <location>
        <begin position="401"/>
        <end position="402"/>
    </location>
    <ligand>
        <name>pyridoxal 5'-phosphate</name>
        <dbReference type="ChEBI" id="CHEBI:597326"/>
    </ligand>
</feature>
<feature type="binding site" evidence="1">
    <location>
        <position position="439"/>
    </location>
    <ligand>
        <name>substrate</name>
    </ligand>
</feature>
<feature type="binding site" evidence="1">
    <location>
        <position position="488"/>
    </location>
    <ligand>
        <name>pyridoxal 5'-phosphate</name>
        <dbReference type="ChEBI" id="CHEBI:597326"/>
    </ligand>
</feature>
<feature type="binding site" evidence="1">
    <location>
        <begin position="513"/>
        <end position="516"/>
    </location>
    <ligand>
        <name>pyridoxal 5'-phosphate</name>
        <dbReference type="ChEBI" id="CHEBI:597326"/>
    </ligand>
</feature>
<feature type="binding site" evidence="1">
    <location>
        <begin position="564"/>
        <end position="567"/>
    </location>
    <ligand>
        <name>pyridoxal 5'-phosphate</name>
        <dbReference type="ChEBI" id="CHEBI:597326"/>
    </ligand>
</feature>
<feature type="binding site" evidence="1">
    <location>
        <position position="684"/>
    </location>
    <ligand>
        <name>substrate</name>
    </ligand>
</feature>
<feature type="modified residue" description="N6-(pyridoxal phosphate)lysine" evidence="1">
    <location>
        <position position="567"/>
    </location>
</feature>
<protein>
    <recommendedName>
        <fullName>Biotin biosynthesis bifunctional protein BioWF</fullName>
    </recommendedName>
    <domain>
        <recommendedName>
            <fullName>6-carboxyhexanoate--CoA ligase</fullName>
            <ecNumber>6.2.1.14</ecNumber>
        </recommendedName>
        <alternativeName>
            <fullName>Pimeloyl-CoA synthase</fullName>
        </alternativeName>
    </domain>
    <domain>
        <recommendedName>
            <fullName>8-amino-7-oxononanoate synthase</fullName>
            <shortName>AONS</shortName>
            <ecNumber>2.3.1.47</ecNumber>
        </recommendedName>
        <alternativeName>
            <fullName>7-keto-8-amino-pelargonic acid synthase</fullName>
            <shortName>7-KAP synthase</shortName>
        </alternativeName>
        <alternativeName>
            <fullName>8-amino-7-ketopelargonate synthase</fullName>
        </alternativeName>
    </domain>
</protein>
<dbReference type="EC" id="6.2.1.14"/>
<dbReference type="EC" id="2.3.1.47"/>
<dbReference type="EMBL" id="CP001620">
    <property type="protein sequence ID" value="ACR18235.1"/>
    <property type="molecule type" value="Genomic_DNA"/>
</dbReference>
<dbReference type="RefSeq" id="WP_012732122.1">
    <property type="nucleotide sequence ID" value="NC_012704.1"/>
</dbReference>
<dbReference type="SMR" id="C4LK80"/>
<dbReference type="STRING" id="645127.ckrop_1506"/>
<dbReference type="KEGG" id="ckp:ckrop_1506"/>
<dbReference type="eggNOG" id="COG0156">
    <property type="taxonomic scope" value="Bacteria"/>
</dbReference>
<dbReference type="HOGENOM" id="CLU_028958_0_0_11"/>
<dbReference type="OrthoDB" id="9807157at2"/>
<dbReference type="UniPathway" id="UPA00078"/>
<dbReference type="UniPathway" id="UPA00999">
    <property type="reaction ID" value="UER00351"/>
</dbReference>
<dbReference type="Proteomes" id="UP000001473">
    <property type="component" value="Chromosome"/>
</dbReference>
<dbReference type="GO" id="GO:0042410">
    <property type="term" value="F:6-carboxyhexanoate-CoA ligase activity"/>
    <property type="evidence" value="ECO:0007669"/>
    <property type="project" value="UniProtKB-EC"/>
</dbReference>
<dbReference type="GO" id="GO:0008710">
    <property type="term" value="F:8-amino-7-oxononanoate synthase activity"/>
    <property type="evidence" value="ECO:0007669"/>
    <property type="project" value="UniProtKB-EC"/>
</dbReference>
<dbReference type="GO" id="GO:0005524">
    <property type="term" value="F:ATP binding"/>
    <property type="evidence" value="ECO:0007669"/>
    <property type="project" value="UniProtKB-KW"/>
</dbReference>
<dbReference type="GO" id="GO:0030170">
    <property type="term" value="F:pyridoxal phosphate binding"/>
    <property type="evidence" value="ECO:0007669"/>
    <property type="project" value="InterPro"/>
</dbReference>
<dbReference type="GO" id="GO:0009102">
    <property type="term" value="P:biotin biosynthetic process"/>
    <property type="evidence" value="ECO:0007669"/>
    <property type="project" value="UniProtKB-UniPathway"/>
</dbReference>
<dbReference type="CDD" id="cd06454">
    <property type="entry name" value="KBL_like"/>
    <property type="match status" value="1"/>
</dbReference>
<dbReference type="Gene3D" id="3.90.1150.10">
    <property type="entry name" value="Aspartate Aminotransferase, domain 1"/>
    <property type="match status" value="1"/>
</dbReference>
<dbReference type="Gene3D" id="3.40.640.10">
    <property type="entry name" value="Type I PLP-dependent aspartate aminotransferase-like (Major domain)"/>
    <property type="match status" value="1"/>
</dbReference>
<dbReference type="InterPro" id="IPR004839">
    <property type="entry name" value="Aminotransferase_I/II_large"/>
</dbReference>
<dbReference type="InterPro" id="IPR050087">
    <property type="entry name" value="AON_synthase_class-II"/>
</dbReference>
<dbReference type="InterPro" id="IPR005499">
    <property type="entry name" value="BioW"/>
</dbReference>
<dbReference type="InterPro" id="IPR015424">
    <property type="entry name" value="PyrdxlP-dep_Trfase"/>
</dbReference>
<dbReference type="InterPro" id="IPR015421">
    <property type="entry name" value="PyrdxlP-dep_Trfase_major"/>
</dbReference>
<dbReference type="InterPro" id="IPR015422">
    <property type="entry name" value="PyrdxlP-dep_Trfase_small"/>
</dbReference>
<dbReference type="NCBIfam" id="NF002360">
    <property type="entry name" value="PRK01322.1"/>
    <property type="match status" value="1"/>
</dbReference>
<dbReference type="PANTHER" id="PTHR13693">
    <property type="entry name" value="CLASS II AMINOTRANSFERASE/8-AMINO-7-OXONONANOATE SYNTHASE"/>
    <property type="match status" value="1"/>
</dbReference>
<dbReference type="Pfam" id="PF00155">
    <property type="entry name" value="Aminotran_1_2"/>
    <property type="match status" value="1"/>
</dbReference>
<dbReference type="Pfam" id="PF03744">
    <property type="entry name" value="BioW"/>
    <property type="match status" value="1"/>
</dbReference>
<dbReference type="SUPFAM" id="SSF53383">
    <property type="entry name" value="PLP-dependent transferases"/>
    <property type="match status" value="1"/>
</dbReference>
<accession>C4LK80</accession>
<name>BIOWF_CORK4</name>